<dbReference type="EC" id="2.7.7.77" evidence="1"/>
<dbReference type="EMBL" id="AM902716">
    <property type="protein sequence ID" value="CAP45020.1"/>
    <property type="molecule type" value="Genomic_DNA"/>
</dbReference>
<dbReference type="SMR" id="A9IFD9"/>
<dbReference type="STRING" id="94624.Bpet4669"/>
<dbReference type="KEGG" id="bpt:Bpet4669"/>
<dbReference type="eggNOG" id="COG0746">
    <property type="taxonomic scope" value="Bacteria"/>
</dbReference>
<dbReference type="Proteomes" id="UP000001225">
    <property type="component" value="Chromosome"/>
</dbReference>
<dbReference type="GO" id="GO:0005737">
    <property type="term" value="C:cytoplasm"/>
    <property type="evidence" value="ECO:0007669"/>
    <property type="project" value="UniProtKB-SubCell"/>
</dbReference>
<dbReference type="GO" id="GO:0005525">
    <property type="term" value="F:GTP binding"/>
    <property type="evidence" value="ECO:0007669"/>
    <property type="project" value="UniProtKB-UniRule"/>
</dbReference>
<dbReference type="GO" id="GO:0046872">
    <property type="term" value="F:metal ion binding"/>
    <property type="evidence" value="ECO:0007669"/>
    <property type="project" value="UniProtKB-KW"/>
</dbReference>
<dbReference type="GO" id="GO:0061603">
    <property type="term" value="F:molybdenum cofactor guanylyltransferase activity"/>
    <property type="evidence" value="ECO:0007669"/>
    <property type="project" value="UniProtKB-EC"/>
</dbReference>
<dbReference type="GO" id="GO:1902758">
    <property type="term" value="P:bis(molybdopterin guanine dinucleotide)molybdenum biosynthetic process"/>
    <property type="evidence" value="ECO:0007669"/>
    <property type="project" value="TreeGrafter"/>
</dbReference>
<dbReference type="CDD" id="cd02503">
    <property type="entry name" value="MobA"/>
    <property type="match status" value="1"/>
</dbReference>
<dbReference type="Gene3D" id="3.90.550.10">
    <property type="entry name" value="Spore Coat Polysaccharide Biosynthesis Protein SpsA, Chain A"/>
    <property type="match status" value="1"/>
</dbReference>
<dbReference type="HAMAP" id="MF_00316">
    <property type="entry name" value="MobA"/>
    <property type="match status" value="1"/>
</dbReference>
<dbReference type="InterPro" id="IPR025877">
    <property type="entry name" value="MobA-like_NTP_Trfase"/>
</dbReference>
<dbReference type="InterPro" id="IPR013482">
    <property type="entry name" value="Molybde_CF_guanTrfase"/>
</dbReference>
<dbReference type="InterPro" id="IPR029044">
    <property type="entry name" value="Nucleotide-diphossugar_trans"/>
</dbReference>
<dbReference type="NCBIfam" id="TIGR02665">
    <property type="entry name" value="molyb_mobA"/>
    <property type="match status" value="1"/>
</dbReference>
<dbReference type="PANTHER" id="PTHR19136">
    <property type="entry name" value="MOLYBDENUM COFACTOR GUANYLYLTRANSFERASE"/>
    <property type="match status" value="1"/>
</dbReference>
<dbReference type="PANTHER" id="PTHR19136:SF81">
    <property type="entry name" value="MOLYBDENUM COFACTOR GUANYLYLTRANSFERASE"/>
    <property type="match status" value="1"/>
</dbReference>
<dbReference type="Pfam" id="PF12804">
    <property type="entry name" value="NTP_transf_3"/>
    <property type="match status" value="1"/>
</dbReference>
<dbReference type="SUPFAM" id="SSF53448">
    <property type="entry name" value="Nucleotide-diphospho-sugar transferases"/>
    <property type="match status" value="1"/>
</dbReference>
<accession>A9IFD9</accession>
<protein>
    <recommendedName>
        <fullName evidence="1">Molybdenum cofactor guanylyltransferase</fullName>
        <shortName evidence="1">MoCo guanylyltransferase</shortName>
        <ecNumber evidence="1">2.7.7.77</ecNumber>
    </recommendedName>
    <alternativeName>
        <fullName evidence="1">GTP:molybdopterin guanylyltransferase</fullName>
    </alternativeName>
    <alternativeName>
        <fullName evidence="1">Mo-MPT guanylyltransferase</fullName>
    </alternativeName>
    <alternativeName>
        <fullName evidence="1">Molybdopterin guanylyltransferase</fullName>
    </alternativeName>
    <alternativeName>
        <fullName evidence="1">Molybdopterin-guanine dinucleotide synthase</fullName>
        <shortName evidence="1">MGD synthase</shortName>
    </alternativeName>
</protein>
<keyword id="KW-0963">Cytoplasm</keyword>
<keyword id="KW-0342">GTP-binding</keyword>
<keyword id="KW-0460">Magnesium</keyword>
<keyword id="KW-0479">Metal-binding</keyword>
<keyword id="KW-0501">Molybdenum cofactor biosynthesis</keyword>
<keyword id="KW-0547">Nucleotide-binding</keyword>
<keyword id="KW-0808">Transferase</keyword>
<feature type="chain" id="PRO_1000115792" description="Molybdenum cofactor guanylyltransferase">
    <location>
        <begin position="1"/>
        <end position="196"/>
    </location>
</feature>
<feature type="binding site" evidence="1">
    <location>
        <begin position="12"/>
        <end position="14"/>
    </location>
    <ligand>
        <name>GTP</name>
        <dbReference type="ChEBI" id="CHEBI:37565"/>
    </ligand>
</feature>
<feature type="binding site" evidence="1">
    <location>
        <position position="25"/>
    </location>
    <ligand>
        <name>GTP</name>
        <dbReference type="ChEBI" id="CHEBI:37565"/>
    </ligand>
</feature>
<feature type="binding site" evidence="1">
    <location>
        <position position="53"/>
    </location>
    <ligand>
        <name>GTP</name>
        <dbReference type="ChEBI" id="CHEBI:37565"/>
    </ligand>
</feature>
<feature type="binding site" evidence="1">
    <location>
        <position position="71"/>
    </location>
    <ligand>
        <name>GTP</name>
        <dbReference type="ChEBI" id="CHEBI:37565"/>
    </ligand>
</feature>
<feature type="binding site" evidence="1">
    <location>
        <position position="101"/>
    </location>
    <ligand>
        <name>GTP</name>
        <dbReference type="ChEBI" id="CHEBI:37565"/>
    </ligand>
</feature>
<feature type="binding site" evidence="1">
    <location>
        <position position="101"/>
    </location>
    <ligand>
        <name>Mg(2+)</name>
        <dbReference type="ChEBI" id="CHEBI:18420"/>
    </ligand>
</feature>
<reference key="1">
    <citation type="journal article" date="2008" name="BMC Genomics">
        <title>The missing link: Bordetella petrii is endowed with both the metabolic versatility of environmental bacteria and virulence traits of pathogenic Bordetellae.</title>
        <authorList>
            <person name="Gross R."/>
            <person name="Guzman C.A."/>
            <person name="Sebaihia M."/>
            <person name="Martin dos Santos V.A.P."/>
            <person name="Pieper D.H."/>
            <person name="Koebnik R."/>
            <person name="Lechner M."/>
            <person name="Bartels D."/>
            <person name="Buhrmester J."/>
            <person name="Choudhuri J.V."/>
            <person name="Ebensen T."/>
            <person name="Gaigalat L."/>
            <person name="Herrmann S."/>
            <person name="Khachane A.N."/>
            <person name="Larisch C."/>
            <person name="Link S."/>
            <person name="Linke B."/>
            <person name="Meyer F."/>
            <person name="Mormann S."/>
            <person name="Nakunst D."/>
            <person name="Rueckert C."/>
            <person name="Schneiker-Bekel S."/>
            <person name="Schulze K."/>
            <person name="Voerholter F.-J."/>
            <person name="Yevsa T."/>
            <person name="Engle J.T."/>
            <person name="Goldman W.E."/>
            <person name="Puehler A."/>
            <person name="Goebel U.B."/>
            <person name="Goesmann A."/>
            <person name="Bloecker H."/>
            <person name="Kaiser O."/>
            <person name="Martinez-Arias R."/>
        </authorList>
    </citation>
    <scope>NUCLEOTIDE SEQUENCE [LARGE SCALE GENOMIC DNA]</scope>
    <source>
        <strain>ATCC BAA-461 / DSM 12804 / CCUG 43448</strain>
    </source>
</reference>
<evidence type="ECO:0000255" key="1">
    <source>
        <dbReference type="HAMAP-Rule" id="MF_00316"/>
    </source>
</evidence>
<comment type="function">
    <text evidence="1">Transfers a GMP moiety from GTP to Mo-molybdopterin (Mo-MPT) cofactor (Moco or molybdenum cofactor) to form Mo-molybdopterin guanine dinucleotide (Mo-MGD) cofactor.</text>
</comment>
<comment type="catalytic activity">
    <reaction evidence="1">
        <text>Mo-molybdopterin + GTP + H(+) = Mo-molybdopterin guanine dinucleotide + diphosphate</text>
        <dbReference type="Rhea" id="RHEA:34243"/>
        <dbReference type="ChEBI" id="CHEBI:15378"/>
        <dbReference type="ChEBI" id="CHEBI:33019"/>
        <dbReference type="ChEBI" id="CHEBI:37565"/>
        <dbReference type="ChEBI" id="CHEBI:71302"/>
        <dbReference type="ChEBI" id="CHEBI:71310"/>
        <dbReference type="EC" id="2.7.7.77"/>
    </reaction>
</comment>
<comment type="cofactor">
    <cofactor evidence="1">
        <name>Mg(2+)</name>
        <dbReference type="ChEBI" id="CHEBI:18420"/>
    </cofactor>
</comment>
<comment type="subunit">
    <text evidence="1">Monomer.</text>
</comment>
<comment type="subcellular location">
    <subcellularLocation>
        <location evidence="1">Cytoplasm</location>
    </subcellularLocation>
</comment>
<comment type="domain">
    <text evidence="1">The N-terminal domain determines nucleotide recognition and specific binding, while the C-terminal domain determines the specific binding to the target protein.</text>
</comment>
<comment type="similarity">
    <text evidence="1">Belongs to the MobA family.</text>
</comment>
<sequence>MIDKTDITGLILAGGRGSRMGGIDKGLQNYQGMPMAMHALLRLAPQVGQAMVNANRNLGAYEAMGVPVWPDNLPDFAGPLAGLAVGLERCETPYLATVPCDCPRFPLDLVERLAGELARQDADIAMAATLQNGQLRTQPVFCLMKTSLLPSLLAFLQSGQRKIDAWTAMHRCVEVRFDDAAAFAGANTLAELQQLP</sequence>
<organism>
    <name type="scientific">Bordetella petrii (strain ATCC BAA-461 / DSM 12804 / CCUG 43448)</name>
    <dbReference type="NCBI Taxonomy" id="340100"/>
    <lineage>
        <taxon>Bacteria</taxon>
        <taxon>Pseudomonadati</taxon>
        <taxon>Pseudomonadota</taxon>
        <taxon>Betaproteobacteria</taxon>
        <taxon>Burkholderiales</taxon>
        <taxon>Alcaligenaceae</taxon>
        <taxon>Bordetella</taxon>
    </lineage>
</organism>
<name>MOBA_BORPD</name>
<gene>
    <name evidence="1" type="primary">mobA</name>
    <name type="ordered locus">Bpet4669</name>
</gene>
<proteinExistence type="inferred from homology"/>